<protein>
    <recommendedName>
        <fullName evidence="8">MIOREX complex component 9</fullName>
    </recommendedName>
    <alternativeName>
        <fullName evidence="6">Mitochondrial organization of gene expression protein 9</fullName>
    </alternativeName>
</protein>
<comment type="function">
    <text evidence="5">Component of MIOREX complexes, large expressome-like assemblies of ribosomes with factors involved in all the steps of post-transcriptional gene expression.</text>
</comment>
<comment type="subunit">
    <text evidence="5">Associates with the mitochondrial ribosome.</text>
</comment>
<comment type="subcellular location">
    <subcellularLocation>
        <location evidence="2 4">Mitochondrion</location>
    </subcellularLocation>
    <subcellularLocation>
        <location evidence="7">Mitochondrion membrane</location>
        <topology evidence="1">Multi-pass membrane protein</topology>
    </subcellularLocation>
</comment>
<comment type="miscellaneous">
    <text evidence="3">Present with 450 molecules/cell in log phase SD medium.</text>
</comment>
<sequence length="420" mass="48312">MFKVPVGLASRTRELMNSVTLNSLNNGKGFNMYLPGILRAFPKPVPSAITSPAIPKYRGESFQFRKLSCISSNYCSTTHQFLSSLKSSTSRLVGKRAFHSSRRAEIKFIFSSKSPKNGNKPFVKVYKVSPFFIIFATASIFTFILTSTIVVIPLIFHFFFPLLIMFFFFKQFKKWQKNIFYKDVLTSLPKTKLKITLPTMRSLQLQPMVQSWKEISSRMGIPNEFAKGLNVDLVKQEETRKQFLSFLQKRVLESFTKNELGIRSYFLGDSVEKWIKESYDLELDIDNCRSELRKFQTFIFSSVRYKLYLDSMKNLPLNPSKKLEGKKHIADVYVIILDESFPAIMFNGGAYSKADFFKILQESETSNSSKTLNTIIAIKSVNTLLSKHFVITTNGDSGEFFSKYNISKINDKNTEYTLKE</sequence>
<proteinExistence type="evidence at protein level"/>
<dbReference type="EMBL" id="Z48432">
    <property type="protein sequence ID" value="CAA88332.1"/>
    <property type="molecule type" value="Genomic_DNA"/>
</dbReference>
<dbReference type="EMBL" id="Z74075">
    <property type="protein sequence ID" value="CAA98585.1"/>
    <property type="molecule type" value="Genomic_DNA"/>
</dbReference>
<dbReference type="EMBL" id="Z71781">
    <property type="protein sequence ID" value="CAA96462.1"/>
    <property type="molecule type" value="Genomic_DNA"/>
</dbReference>
<dbReference type="EMBL" id="BK006938">
    <property type="protein sequence ID" value="DAA11825.1"/>
    <property type="molecule type" value="Genomic_DNA"/>
</dbReference>
<dbReference type="PIR" id="S67559">
    <property type="entry name" value="S67559"/>
</dbReference>
<dbReference type="RefSeq" id="NP_010257.1">
    <property type="nucleotide sequence ID" value="NM_001180086.1"/>
</dbReference>
<dbReference type="BioGRID" id="32029">
    <property type="interactions" value="54"/>
</dbReference>
<dbReference type="FunCoup" id="Q07349">
    <property type="interactions" value="67"/>
</dbReference>
<dbReference type="IntAct" id="Q07349">
    <property type="interactions" value="2"/>
</dbReference>
<dbReference type="MINT" id="Q07349"/>
<dbReference type="STRING" id="4932.YDL027C"/>
<dbReference type="iPTMnet" id="Q07349"/>
<dbReference type="PaxDb" id="4932-YDL027C"/>
<dbReference type="PeptideAtlas" id="Q07349"/>
<dbReference type="EnsemblFungi" id="YDL027C_mRNA">
    <property type="protein sequence ID" value="YDL027C"/>
    <property type="gene ID" value="YDL027C"/>
</dbReference>
<dbReference type="GeneID" id="851535"/>
<dbReference type="KEGG" id="sce:YDL027C"/>
<dbReference type="AGR" id="SGD:S000002185"/>
<dbReference type="SGD" id="S000002185">
    <property type="gene designation" value="MRX9"/>
</dbReference>
<dbReference type="VEuPathDB" id="FungiDB:YDL027C"/>
<dbReference type="eggNOG" id="ENOG502S11T">
    <property type="taxonomic scope" value="Eukaryota"/>
</dbReference>
<dbReference type="HOGENOM" id="CLU_659145_0_0_1"/>
<dbReference type="InParanoid" id="Q07349"/>
<dbReference type="OMA" id="RTNWINT"/>
<dbReference type="OrthoDB" id="4067755at2759"/>
<dbReference type="BioCyc" id="YEAST:G3O-29453-MONOMER"/>
<dbReference type="BioGRID-ORCS" id="851535">
    <property type="hits" value="0 hits in 10 CRISPR screens"/>
</dbReference>
<dbReference type="PRO" id="PR:Q07349"/>
<dbReference type="Proteomes" id="UP000002311">
    <property type="component" value="Chromosome IV"/>
</dbReference>
<dbReference type="RNAct" id="Q07349">
    <property type="molecule type" value="protein"/>
</dbReference>
<dbReference type="GO" id="GO:0005783">
    <property type="term" value="C:endoplasmic reticulum"/>
    <property type="evidence" value="ECO:0007005"/>
    <property type="project" value="SGD"/>
</dbReference>
<dbReference type="GO" id="GO:0005743">
    <property type="term" value="C:mitochondrial inner membrane"/>
    <property type="evidence" value="ECO:0000314"/>
    <property type="project" value="SGD"/>
</dbReference>
<dbReference type="GO" id="GO:0005739">
    <property type="term" value="C:mitochondrion"/>
    <property type="evidence" value="ECO:0007005"/>
    <property type="project" value="SGD"/>
</dbReference>
<reference key="1">
    <citation type="journal article" date="1997" name="Nature">
        <title>The nucleotide sequence of Saccharomyces cerevisiae chromosome IV.</title>
        <authorList>
            <person name="Jacq C."/>
            <person name="Alt-Moerbe J."/>
            <person name="Andre B."/>
            <person name="Arnold W."/>
            <person name="Bahr A."/>
            <person name="Ballesta J.P.G."/>
            <person name="Bargues M."/>
            <person name="Baron L."/>
            <person name="Becker A."/>
            <person name="Biteau N."/>
            <person name="Bloecker H."/>
            <person name="Blugeon C."/>
            <person name="Boskovic J."/>
            <person name="Brandt P."/>
            <person name="Brueckner M."/>
            <person name="Buitrago M.J."/>
            <person name="Coster F."/>
            <person name="Delaveau T."/>
            <person name="del Rey F."/>
            <person name="Dujon B."/>
            <person name="Eide L.G."/>
            <person name="Garcia-Cantalejo J.M."/>
            <person name="Goffeau A."/>
            <person name="Gomez-Peris A."/>
            <person name="Granotier C."/>
            <person name="Hanemann V."/>
            <person name="Hankeln T."/>
            <person name="Hoheisel J.D."/>
            <person name="Jaeger W."/>
            <person name="Jimenez A."/>
            <person name="Jonniaux J.-L."/>
            <person name="Kraemer C."/>
            <person name="Kuester H."/>
            <person name="Laamanen P."/>
            <person name="Legros Y."/>
            <person name="Louis E.J."/>
            <person name="Moeller-Rieker S."/>
            <person name="Monnet A."/>
            <person name="Moro M."/>
            <person name="Mueller-Auer S."/>
            <person name="Nussbaumer B."/>
            <person name="Paricio N."/>
            <person name="Paulin L."/>
            <person name="Perea J."/>
            <person name="Perez-Alonso M."/>
            <person name="Perez-Ortin J.E."/>
            <person name="Pohl T.M."/>
            <person name="Prydz H."/>
            <person name="Purnelle B."/>
            <person name="Rasmussen S.W."/>
            <person name="Remacha M.A."/>
            <person name="Revuelta J.L."/>
            <person name="Rieger M."/>
            <person name="Salom D."/>
            <person name="Saluz H.P."/>
            <person name="Saiz J.E."/>
            <person name="Saren A.-M."/>
            <person name="Schaefer M."/>
            <person name="Scharfe M."/>
            <person name="Schmidt E.R."/>
            <person name="Schneider C."/>
            <person name="Scholler P."/>
            <person name="Schwarz S."/>
            <person name="Soler-Mira A."/>
            <person name="Urrestarazu L.A."/>
            <person name="Verhasselt P."/>
            <person name="Vissers S."/>
            <person name="Voet M."/>
            <person name="Volckaert G."/>
            <person name="Wagner G."/>
            <person name="Wambutt R."/>
            <person name="Wedler E."/>
            <person name="Wedler H."/>
            <person name="Woelfl S."/>
            <person name="Harris D.E."/>
            <person name="Bowman S."/>
            <person name="Brown D."/>
            <person name="Churcher C.M."/>
            <person name="Connor R."/>
            <person name="Dedman K."/>
            <person name="Gentles S."/>
            <person name="Hamlin N."/>
            <person name="Hunt S."/>
            <person name="Jones L."/>
            <person name="McDonald S."/>
            <person name="Murphy L.D."/>
            <person name="Niblett D."/>
            <person name="Odell C."/>
            <person name="Oliver K."/>
            <person name="Rajandream M.A."/>
            <person name="Richards C."/>
            <person name="Shore L."/>
            <person name="Walsh S.V."/>
            <person name="Barrell B.G."/>
            <person name="Dietrich F.S."/>
            <person name="Mulligan J.T."/>
            <person name="Allen E."/>
            <person name="Araujo R."/>
            <person name="Aviles E."/>
            <person name="Berno A."/>
            <person name="Carpenter J."/>
            <person name="Chen E."/>
            <person name="Cherry J.M."/>
            <person name="Chung E."/>
            <person name="Duncan M."/>
            <person name="Hunicke-Smith S."/>
            <person name="Hyman R.W."/>
            <person name="Komp C."/>
            <person name="Lashkari D."/>
            <person name="Lew H."/>
            <person name="Lin D."/>
            <person name="Mosedale D."/>
            <person name="Nakahara K."/>
            <person name="Namath A."/>
            <person name="Oefner P."/>
            <person name="Oh C."/>
            <person name="Petel F.X."/>
            <person name="Roberts D."/>
            <person name="Schramm S."/>
            <person name="Schroeder M."/>
            <person name="Shogren T."/>
            <person name="Shroff N."/>
            <person name="Winant A."/>
            <person name="Yelton M.A."/>
            <person name="Botstein D."/>
            <person name="Davis R.W."/>
            <person name="Johnston M."/>
            <person name="Andrews S."/>
            <person name="Brinkman R."/>
            <person name="Cooper J."/>
            <person name="Ding H."/>
            <person name="Du Z."/>
            <person name="Favello A."/>
            <person name="Fulton L."/>
            <person name="Gattung S."/>
            <person name="Greco T."/>
            <person name="Hallsworth K."/>
            <person name="Hawkins J."/>
            <person name="Hillier L.W."/>
            <person name="Jier M."/>
            <person name="Johnson D."/>
            <person name="Johnston L."/>
            <person name="Kirsten J."/>
            <person name="Kucaba T."/>
            <person name="Langston Y."/>
            <person name="Latreille P."/>
            <person name="Le T."/>
            <person name="Mardis E."/>
            <person name="Menezes S."/>
            <person name="Miller N."/>
            <person name="Nhan M."/>
            <person name="Pauley A."/>
            <person name="Peluso D."/>
            <person name="Rifkin L."/>
            <person name="Riles L."/>
            <person name="Taich A."/>
            <person name="Trevaskis E."/>
            <person name="Vignati D."/>
            <person name="Wilcox L."/>
            <person name="Wohldman P."/>
            <person name="Vaudin M."/>
            <person name="Wilson R."/>
            <person name="Waterston R."/>
            <person name="Albermann K."/>
            <person name="Hani J."/>
            <person name="Heumann K."/>
            <person name="Kleine K."/>
            <person name="Mewes H.-W."/>
            <person name="Zollner A."/>
            <person name="Zaccaria P."/>
        </authorList>
    </citation>
    <scope>NUCLEOTIDE SEQUENCE [LARGE SCALE GENOMIC DNA]</scope>
    <source>
        <strain>ATCC 204508 / S288c</strain>
    </source>
</reference>
<reference key="2">
    <citation type="journal article" date="2014" name="G3 (Bethesda)">
        <title>The reference genome sequence of Saccharomyces cerevisiae: Then and now.</title>
        <authorList>
            <person name="Engel S.R."/>
            <person name="Dietrich F.S."/>
            <person name="Fisk D.G."/>
            <person name="Binkley G."/>
            <person name="Balakrishnan R."/>
            <person name="Costanzo M.C."/>
            <person name="Dwight S.S."/>
            <person name="Hitz B.C."/>
            <person name="Karra K."/>
            <person name="Nash R.S."/>
            <person name="Weng S."/>
            <person name="Wong E.D."/>
            <person name="Lloyd P."/>
            <person name="Skrzypek M.S."/>
            <person name="Miyasato S.R."/>
            <person name="Simison M."/>
            <person name="Cherry J.M."/>
        </authorList>
    </citation>
    <scope>GENOME REANNOTATION</scope>
    <source>
        <strain>ATCC 204508 / S288c</strain>
    </source>
</reference>
<reference key="3">
    <citation type="journal article" date="1997" name="Yeast">
        <title>The sequence of a 36.7 kb segment on the left arm of chromosome IV from Saccharomyces cerevisiae reveals 20 non-overlapping open reading frames (ORFs) including SIT4, FAD1, NAM1, RNA11, SIR2, NAT1, PRP9, ACT2 and MPS1 and 11 new ORFs.</title>
        <authorList>
            <person name="Saren A.-M."/>
            <person name="Laamanen P."/>
            <person name="Lejarcegui J.B."/>
            <person name="Paulin L."/>
        </authorList>
    </citation>
    <scope>NUCLEOTIDE SEQUENCE [GENOMIC DNA] OF 1-264</scope>
    <source>
        <strain>ATCC 204508 / S288c</strain>
    </source>
</reference>
<reference key="4">
    <citation type="journal article" date="2003" name="Nature">
        <title>Global analysis of protein localization in budding yeast.</title>
        <authorList>
            <person name="Huh W.-K."/>
            <person name="Falvo J.V."/>
            <person name="Gerke L.C."/>
            <person name="Carroll A.S."/>
            <person name="Howson R.W."/>
            <person name="Weissman J.S."/>
            <person name="O'Shea E.K."/>
        </authorList>
    </citation>
    <scope>SUBCELLULAR LOCATION [LARGE SCALE ANALYSIS]</scope>
</reference>
<reference key="5">
    <citation type="journal article" date="2003" name="Nature">
        <title>Global analysis of protein expression in yeast.</title>
        <authorList>
            <person name="Ghaemmaghami S."/>
            <person name="Huh W.-K."/>
            <person name="Bower K."/>
            <person name="Howson R.W."/>
            <person name="Belle A."/>
            <person name="Dephoure N."/>
            <person name="O'Shea E.K."/>
            <person name="Weissman J.S."/>
        </authorList>
    </citation>
    <scope>LEVEL OF PROTEIN EXPRESSION [LARGE SCALE ANALYSIS]</scope>
</reference>
<reference key="6">
    <citation type="journal article" date="2006" name="J. Proteome Res.">
        <title>Toward the complete yeast mitochondrial proteome: multidimensional separation techniques for mitochondrial proteomics.</title>
        <authorList>
            <person name="Reinders J."/>
            <person name="Zahedi R.P."/>
            <person name="Pfanner N."/>
            <person name="Meisinger C."/>
            <person name="Sickmann A."/>
        </authorList>
    </citation>
    <scope>SUBCELLULAR LOCATION [LARGE SCALE ANALYSIS]</scope>
    <scope>IDENTIFICATION BY MASS SPECTROMETRY</scope>
</reference>
<reference key="7">
    <citation type="journal article" date="2015" name="Cell Rep.">
        <title>Organization of mitochondrial gene expression in two distinct ribosome-containing assemblies.</title>
        <authorList>
            <person name="Kehrein K."/>
            <person name="Schilling R."/>
            <person name="Moller-Hergt B.V."/>
            <person name="Wurm C.A."/>
            <person name="Jakobs S."/>
            <person name="Lamkemeyer T."/>
            <person name="Langer T."/>
            <person name="Ott M."/>
        </authorList>
    </citation>
    <scope>FUNCTION</scope>
    <scope>SUBUNIT</scope>
</reference>
<organism>
    <name type="scientific">Saccharomyces cerevisiae (strain ATCC 204508 / S288c)</name>
    <name type="common">Baker's yeast</name>
    <dbReference type="NCBI Taxonomy" id="559292"/>
    <lineage>
        <taxon>Eukaryota</taxon>
        <taxon>Fungi</taxon>
        <taxon>Dikarya</taxon>
        <taxon>Ascomycota</taxon>
        <taxon>Saccharomycotina</taxon>
        <taxon>Saccharomycetes</taxon>
        <taxon>Saccharomycetales</taxon>
        <taxon>Saccharomycetaceae</taxon>
        <taxon>Saccharomyces</taxon>
    </lineage>
</organism>
<accession>Q07349</accession>
<accession>D6VRW5</accession>
<accession>Q05321</accession>
<accession>Q05435</accession>
<accession>Q7LHC7</accession>
<keyword id="KW-0472">Membrane</keyword>
<keyword id="KW-0496">Mitochondrion</keyword>
<keyword id="KW-1185">Reference proteome</keyword>
<keyword id="KW-0812">Transmembrane</keyword>
<keyword id="KW-1133">Transmembrane helix</keyword>
<name>MRX9_YEAST</name>
<evidence type="ECO:0000255" key="1"/>
<evidence type="ECO:0000269" key="2">
    <source>
    </source>
</evidence>
<evidence type="ECO:0000269" key="3">
    <source>
    </source>
</evidence>
<evidence type="ECO:0000269" key="4">
    <source>
    </source>
</evidence>
<evidence type="ECO:0000269" key="5">
    <source>
    </source>
</evidence>
<evidence type="ECO:0000303" key="6">
    <source>
    </source>
</evidence>
<evidence type="ECO:0000305" key="7"/>
<evidence type="ECO:0000305" key="8">
    <source>
    </source>
</evidence>
<evidence type="ECO:0000312" key="9">
    <source>
        <dbReference type="SGD" id="S000002185"/>
    </source>
</evidence>
<feature type="chain" id="PRO_0000202592" description="MIOREX complex component 9">
    <location>
        <begin position="1"/>
        <end position="420"/>
    </location>
</feature>
<feature type="transmembrane region" description="Helical" evidence="1">
    <location>
        <begin position="125"/>
        <end position="145"/>
    </location>
</feature>
<feature type="transmembrane region" description="Helical" evidence="1">
    <location>
        <begin position="149"/>
        <end position="169"/>
    </location>
</feature>
<gene>
    <name evidence="6" type="primary">MRX9</name>
    <name evidence="9" type="ordered locus">YDL027C</name>
    <name type="ORF">D2800</name>
</gene>